<feature type="signal peptide" evidence="2">
    <location>
        <begin position="1"/>
        <end position="27"/>
    </location>
</feature>
<feature type="chain" id="PRO_0000016430" description="Interferon type B">
    <location>
        <begin position="28"/>
        <end position="203"/>
    </location>
</feature>
<feature type="glycosylation site" description="N-linked (GlcNAc...) asparagine" evidence="2">
    <location>
        <position position="37"/>
    </location>
</feature>
<feature type="glycosylation site" description="N-linked (GlcNAc...) asparagine" evidence="2">
    <location>
        <position position="160"/>
    </location>
</feature>
<feature type="disulfide bond" evidence="1">
    <location>
        <begin position="28"/>
        <end position="125"/>
    </location>
</feature>
<feature type="disulfide bond" evidence="2">
    <location>
        <begin position="57"/>
        <end position="164"/>
    </location>
</feature>
<keyword id="KW-0051">Antiviral defense</keyword>
<keyword id="KW-0202">Cytokine</keyword>
<keyword id="KW-1015">Disulfide bond</keyword>
<keyword id="KW-0325">Glycoprotein</keyword>
<keyword id="KW-1185">Reference proteome</keyword>
<keyword id="KW-0964">Secreted</keyword>
<keyword id="KW-0732">Signal</keyword>
<protein>
    <recommendedName>
        <fullName>Interferon type B</fullName>
        <shortName>IFN-beta</shortName>
    </recommendedName>
</protein>
<dbReference type="EMBL" id="X92479">
    <property type="protein sequence ID" value="CAA63217.1"/>
    <property type="molecule type" value="Genomic_DNA"/>
</dbReference>
<dbReference type="EMBL" id="AY974089">
    <property type="protein sequence ID" value="AAX83679.1"/>
    <property type="molecule type" value="mRNA"/>
</dbReference>
<dbReference type="RefSeq" id="NP_001020007.1">
    <property type="nucleotide sequence ID" value="NM_001024836.1"/>
</dbReference>
<dbReference type="SMR" id="Q90873"/>
<dbReference type="FunCoup" id="Q90873">
    <property type="interactions" value="90"/>
</dbReference>
<dbReference type="STRING" id="9031.ENSGALP00000038687"/>
<dbReference type="GlyCosmos" id="Q90873">
    <property type="glycosylation" value="2 sites, No reported glycans"/>
</dbReference>
<dbReference type="GlyGen" id="Q90873">
    <property type="glycosylation" value="2 sites"/>
</dbReference>
<dbReference type="PaxDb" id="9031-ENSGALP00000038687"/>
<dbReference type="Ensembl" id="ENSGALT00010029563.1">
    <property type="protein sequence ID" value="ENSGALP00010017190.1"/>
    <property type="gene ID" value="ENSGALG00010012349.1"/>
</dbReference>
<dbReference type="GeneID" id="554219"/>
<dbReference type="KEGG" id="gga:554219"/>
<dbReference type="CTD" id="3467"/>
<dbReference type="VEuPathDB" id="HostDB:geneid_554219"/>
<dbReference type="eggNOG" id="ENOG502SQGR">
    <property type="taxonomic scope" value="Eukaryota"/>
</dbReference>
<dbReference type="GeneTree" id="ENSGT01000000214430"/>
<dbReference type="HOGENOM" id="CLU_109427_1_0_1"/>
<dbReference type="InParanoid" id="Q90873"/>
<dbReference type="OMA" id="CHHLRTH"/>
<dbReference type="OrthoDB" id="9110568at2759"/>
<dbReference type="PhylomeDB" id="Q90873"/>
<dbReference type="TreeFam" id="TF336177"/>
<dbReference type="Reactome" id="R-GGA-909733">
    <property type="pathway name" value="Interferon alpha/beta signaling"/>
</dbReference>
<dbReference type="Reactome" id="R-GGA-912694">
    <property type="pathway name" value="Regulation of IFNA/IFNB signaling"/>
</dbReference>
<dbReference type="PRO" id="PR:Q90873"/>
<dbReference type="Proteomes" id="UP000000539">
    <property type="component" value="Chromosome Z"/>
</dbReference>
<dbReference type="Bgee" id="ENSGALG00000005759">
    <property type="expression patterns" value="Expressed in skeletal muscle tissue and 3 other cell types or tissues"/>
</dbReference>
<dbReference type="GO" id="GO:0005615">
    <property type="term" value="C:extracellular space"/>
    <property type="evidence" value="ECO:0000318"/>
    <property type="project" value="GO_Central"/>
</dbReference>
<dbReference type="GO" id="GO:0005125">
    <property type="term" value="F:cytokine activity"/>
    <property type="evidence" value="ECO:0000318"/>
    <property type="project" value="GO_Central"/>
</dbReference>
<dbReference type="GO" id="GO:0005132">
    <property type="term" value="F:type I interferon receptor binding"/>
    <property type="evidence" value="ECO:0000318"/>
    <property type="project" value="GO_Central"/>
</dbReference>
<dbReference type="GO" id="GO:0002250">
    <property type="term" value="P:adaptive immune response"/>
    <property type="evidence" value="ECO:0000318"/>
    <property type="project" value="GO_Central"/>
</dbReference>
<dbReference type="GO" id="GO:0140374">
    <property type="term" value="P:antiviral innate immune response"/>
    <property type="evidence" value="ECO:0000314"/>
    <property type="project" value="GO_Central"/>
</dbReference>
<dbReference type="GO" id="GO:0002312">
    <property type="term" value="P:B cell activation involved in immune response"/>
    <property type="evidence" value="ECO:0000318"/>
    <property type="project" value="GO_Central"/>
</dbReference>
<dbReference type="GO" id="GO:0006959">
    <property type="term" value="P:humoral immune response"/>
    <property type="evidence" value="ECO:0000318"/>
    <property type="project" value="GO_Central"/>
</dbReference>
<dbReference type="GO" id="GO:0002323">
    <property type="term" value="P:natural killer cell activation involved in immune response"/>
    <property type="evidence" value="ECO:0000318"/>
    <property type="project" value="GO_Central"/>
</dbReference>
<dbReference type="GO" id="GO:0002537">
    <property type="term" value="P:nitric oxide production involved in inflammatory response"/>
    <property type="evidence" value="ECO:0000314"/>
    <property type="project" value="GO_Central"/>
</dbReference>
<dbReference type="GO" id="GO:0034141">
    <property type="term" value="P:positive regulation of toll-like receptor 3 signaling pathway"/>
    <property type="evidence" value="ECO:0000270"/>
    <property type="project" value="AgBase"/>
</dbReference>
<dbReference type="GO" id="GO:0043330">
    <property type="term" value="P:response to exogenous dsRNA"/>
    <property type="evidence" value="ECO:0000318"/>
    <property type="project" value="GO_Central"/>
</dbReference>
<dbReference type="GO" id="GO:0002286">
    <property type="term" value="P:T cell activation involved in immune response"/>
    <property type="evidence" value="ECO:0000318"/>
    <property type="project" value="GO_Central"/>
</dbReference>
<dbReference type="GO" id="GO:0060337">
    <property type="term" value="P:type I interferon-mediated signaling pathway"/>
    <property type="evidence" value="ECO:0000318"/>
    <property type="project" value="GO_Central"/>
</dbReference>
<dbReference type="CDD" id="cd00095">
    <property type="entry name" value="IFab"/>
    <property type="match status" value="1"/>
</dbReference>
<dbReference type="Gene3D" id="1.20.1250.10">
    <property type="match status" value="1"/>
</dbReference>
<dbReference type="InterPro" id="IPR009079">
    <property type="entry name" value="4_helix_cytokine-like_core"/>
</dbReference>
<dbReference type="InterPro" id="IPR000471">
    <property type="entry name" value="Interferon_alpha/beta/delta"/>
</dbReference>
<dbReference type="PANTHER" id="PTHR11691:SF73">
    <property type="entry name" value="INTERFERON BETA"/>
    <property type="match status" value="1"/>
</dbReference>
<dbReference type="PANTHER" id="PTHR11691">
    <property type="entry name" value="TYPE I INTERFERON"/>
    <property type="match status" value="1"/>
</dbReference>
<dbReference type="Pfam" id="PF00143">
    <property type="entry name" value="Interferon"/>
    <property type="match status" value="1"/>
</dbReference>
<dbReference type="SMART" id="SM00076">
    <property type="entry name" value="IFabd"/>
    <property type="match status" value="1"/>
</dbReference>
<dbReference type="SUPFAM" id="SSF47266">
    <property type="entry name" value="4-helical cytokines"/>
    <property type="match status" value="1"/>
</dbReference>
<dbReference type="PROSITE" id="PS00252">
    <property type="entry name" value="INTERFERON_A_B_D"/>
    <property type="match status" value="1"/>
</dbReference>
<proteinExistence type="evidence at transcript level"/>
<comment type="function">
    <text>Has antiviral activities.</text>
</comment>
<comment type="subcellular location">
    <subcellularLocation>
        <location evidence="3">Secreted</location>
    </subcellularLocation>
</comment>
<comment type="similarity">
    <text evidence="3">Belongs to the alpha/beta interferon family.</text>
</comment>
<organism>
    <name type="scientific">Gallus gallus</name>
    <name type="common">Chicken</name>
    <dbReference type="NCBI Taxonomy" id="9031"/>
    <lineage>
        <taxon>Eukaryota</taxon>
        <taxon>Metazoa</taxon>
        <taxon>Chordata</taxon>
        <taxon>Craniata</taxon>
        <taxon>Vertebrata</taxon>
        <taxon>Euteleostomi</taxon>
        <taxon>Archelosauria</taxon>
        <taxon>Archosauria</taxon>
        <taxon>Dinosauria</taxon>
        <taxon>Saurischia</taxon>
        <taxon>Theropoda</taxon>
        <taxon>Coelurosauria</taxon>
        <taxon>Aves</taxon>
        <taxon>Neognathae</taxon>
        <taxon>Galloanserae</taxon>
        <taxon>Galliformes</taxon>
        <taxon>Phasianidae</taxon>
        <taxon>Phasianinae</taxon>
        <taxon>Gallus</taxon>
    </lineage>
</organism>
<name>IFNB_CHICK</name>
<accession>Q90873</accession>
<accession>Q4Z8K4</accession>
<sequence length="203" mass="23686">MTANHQSPGMHSILLLLLLPALTTTFSCNHLRHQDANFSWKSLQLLQNTAPPPPQPCPQQDVTFPFPETLLKSKDKKQAAITTLRILQHLFNMLSSPHTPKHWIDRTRHSLLNQIQHYIHHLEQCFVNQGTRSQRRGPRNAHLSINKYFRSIHNFLQHNNYSACTWDHVRLQARDCFRHVDTLIQWMKSRAPLTASSKRLNTQ</sequence>
<evidence type="ECO:0000250" key="1"/>
<evidence type="ECO:0000255" key="2"/>
<evidence type="ECO:0000305" key="3"/>
<reference key="1">
    <citation type="journal article" date="1996" name="J. Biol. Chem.">
        <title>A family of genes coding for two serologically distinct chicken interferons.</title>
        <authorList>
            <person name="Sick C."/>
            <person name="Schultz U."/>
            <person name="Staeheli P."/>
        </authorList>
    </citation>
    <scope>NUCLEOTIDE SEQUENCE [GENOMIC DNA]</scope>
    <source>
        <strain>White leghorn</strain>
        <tissue>Spleen</tissue>
    </source>
</reference>
<reference key="2">
    <citation type="submission" date="2005-03" db="EMBL/GenBank/DDBJ databases">
        <authorList>
            <person name="Han C.-L."/>
            <person name="Wang M."/>
            <person name="Gao F."/>
        </authorList>
    </citation>
    <scope>NUCLEOTIDE SEQUENCE [MRNA]</scope>
    <source>
        <tissue>Liver</tissue>
    </source>
</reference>
<gene>
    <name type="primary">IFNB</name>
    <name type="synonym">IFN2</name>
</gene>